<protein>
    <recommendedName>
        <fullName>Nucleoprotein</fullName>
    </recommendedName>
    <alternativeName>
        <fullName>Nucleocapsid protein</fullName>
        <shortName>Protein N</shortName>
    </alternativeName>
</protein>
<gene>
    <name type="primary">N</name>
</gene>
<comment type="function">
    <text evidence="2 4 5 8">Encapsidates the genomic RNA, protecting it from nucleases (Probable) (PubMed:20547879). Displays high affinity for single-stranded nucleic acid (PubMed:23129612). The encapsidated genomic RNA is termed the nucleocapsid (NC) or ribonucleoprotein (PubMed:20547879). The ribonucleoprotein has a non-helical structure (PubMed:20547879). Serves as template for viral transcription and replication (By similarity). After replication, the nucleocapsid is recruited to the host Golgi apparatus by glycoprotein Gn for packaging into virus particles (By similarity).</text>
</comment>
<comment type="subunit">
    <text evidence="2 3 4 5 6">Homodimer (PubMed:20547879). Homohexamer; ring-shaped, necessary to form the nucleocapsid (PubMed:20547879, PubMed:23129612). Homopentamers; opened pentamers in solution (By similarity). Binds to viral genomic RNA (PubMed:34960686). Interacts with glycoprotein Gn; this interaction allows packaging of nucleocapsids into virions (By similarity).</text>
</comment>
<comment type="interaction">
    <interactant intactId="EBI-15861524">
        <id>D3K5I7</id>
    </interactant>
    <interactant intactId="EBI-15861524">
        <id>D3K5I7</id>
        <label>N</label>
    </interactant>
    <organismsDiffer>false</organismsDiffer>
    <experiments>6</experiments>
</comment>
<comment type="subcellular location">
    <subcellularLocation>
        <location evidence="6">Virion</location>
    </subcellularLocation>
    <subcellularLocation>
        <location evidence="6">Host cytoplasm</location>
    </subcellularLocation>
    <subcellularLocation>
        <location evidence="6">Host nucleus</location>
    </subcellularLocation>
    <subcellularLocation>
        <location evidence="1">Host endoplasmic reticulum-Golgi intermediate compartment</location>
    </subcellularLocation>
    <subcellularLocation>
        <location evidence="1">Host Golgi apparatus</location>
    </subcellularLocation>
</comment>
<comment type="domain">
    <text evidence="3">The N-terminus is involved in homooligomerization.</text>
</comment>
<comment type="similarity">
    <text evidence="7">Belongs to the phlebovirus nucleocapsid protein family.</text>
</comment>
<reference key="1">
    <citation type="journal article" date="2007" name="J. Virol.">
        <title>Complete genome analysis of 33 ecologically and biologically diverse Rift Valley fever virus strains reveals widespread virus movement and low genetic diversity due to recent common ancestry.</title>
        <authorList>
            <person name="Bird B.H."/>
            <person name="Khristova M.L."/>
            <person name="Rollin P.E."/>
            <person name="Ksiazek T.G."/>
            <person name="Nichol S.T."/>
        </authorList>
    </citation>
    <scope>NUCLEOTIDE SEQUENCE [GENOMIC DNA]</scope>
</reference>
<reference key="2">
    <citation type="journal article" date="2021" name="Viruses">
        <title>Time-Resolved Analysis of N-RNA Interactions during RVFV Infection Shows Qualitative and Quantitative Shifts in RNA Encapsidation and Packaging.</title>
        <authorList>
            <person name="Hayashi M."/>
            <person name="Schultz E.P."/>
            <person name="Lanchy J.M."/>
            <person name="Lodmell J.S."/>
        </authorList>
    </citation>
    <scope>RNA-BINDING</scope>
    <scope>SUBCELLULAR LOCATION</scope>
    <scope>FUNCTION</scope>
</reference>
<reference evidence="10" key="3">
    <citation type="journal article" date="2010" name="Proc. Natl. Acad. Sci. U.S.A.">
        <title>Structure of the Rift Valley fever virus nucleocapsid protein reveals another architecture for RNA encapsidation.</title>
        <authorList>
            <person name="Raymond D.D."/>
            <person name="Piper M.E."/>
            <person name="Gerrard S.R."/>
            <person name="Smith J.L."/>
        </authorList>
    </citation>
    <scope>NUCLEOTIDE SEQUENCE [GENOMIC DNA]</scope>
    <scope>X-RAY CRYSTALLOGRAPHY (1.93 ANGSTROMS)</scope>
    <scope>SUBUNIT</scope>
    <scope>FUNCTION</scope>
    <scope>MUTAGENESIS OF TRP-125 AND ARG-178</scope>
    <source>
        <strain evidence="9">ZH-501</strain>
    </source>
</reference>
<reference evidence="11 12 13 14 15" key="4">
    <citation type="journal article" date="2012" name="Proc. Natl. Acad. Sci. U.S.A.">
        <title>Phleboviruses encapsidate their genomes by sequestering RNA bases.</title>
        <authorList>
            <person name="Raymond D.D."/>
            <person name="Piper M.E."/>
            <person name="Gerrard S.R."/>
            <person name="Skiniotis G."/>
            <person name="Smith J.L."/>
        </authorList>
    </citation>
    <scope>X-RAY CRYSTALLOGRAPHY (2.15 ANGSTROMS) IN COMPLEX WITH SINGLE-STRANDED RNA</scope>
    <scope>RNA-BINDING</scope>
    <scope>SUBUNIT</scope>
    <scope>FUNCTION</scope>
</reference>
<sequence length="245" mass="27330">MDNYQELAIQFAAQAVDRNEIEQWVREFAYQGFDARRVIELLKQYGGADWEKDAKKMIVLALTRGNKPRRMMMKMSKEGKATVEALINKYKLKEGNPSRDELTLSRVAAALAGRTCQALVVLSEWLPVTGTTMDGLSPAYPRHMMHPSFAGMVDPSLPGDYLRAILDAHSLYLLQFSRVINPNLRGRTKEEVAATFTQPMNAAVNSNFISHEKRREFLKAFGLVDSNGKPSAAVMAAAQAYKTAA</sequence>
<accession>D3K5I7</accession>
<proteinExistence type="evidence at protein level"/>
<organismHost>
    <name type="scientific">Aedes</name>
    <dbReference type="NCBI Taxonomy" id="7158"/>
</organismHost>
<organismHost>
    <name type="scientific">Bos taurus</name>
    <name type="common">Bovine</name>
    <dbReference type="NCBI Taxonomy" id="9913"/>
</organismHost>
<organismHost>
    <name type="scientific">Bos taurus x Bison bison</name>
    <name type="common">beefalo</name>
    <dbReference type="NCBI Taxonomy" id="297284"/>
</organismHost>
<organismHost>
    <name type="scientific">Camelus bactrianus</name>
    <name type="common">Bactrian camel</name>
    <dbReference type="NCBI Taxonomy" id="9837"/>
</organismHost>
<organismHost>
    <name type="scientific">Capra hircus</name>
    <name type="common">Goat</name>
    <dbReference type="NCBI Taxonomy" id="9925"/>
</organismHost>
<organismHost>
    <name type="scientific">Homo sapiens</name>
    <name type="common">Human</name>
    <dbReference type="NCBI Taxonomy" id="9606"/>
</organismHost>
<organismHost>
    <name type="scientific">Ovis aries</name>
    <name type="common">Sheep</name>
    <dbReference type="NCBI Taxonomy" id="9940"/>
</organismHost>
<organismHost>
    <name type="scientific">Phlebotomus papatasi</name>
    <name type="common">Sandfly</name>
    <dbReference type="NCBI Taxonomy" id="29031"/>
</organismHost>
<name>NCAP_RVFV</name>
<feature type="chain" id="PRO_0000456175" description="Nucleoprotein">
    <location>
        <begin position="1"/>
        <end position="245"/>
    </location>
</feature>
<feature type="region of interest" description="Essential for oligomerization" evidence="2">
    <location>
        <begin position="1"/>
        <end position="71"/>
    </location>
</feature>
<feature type="binding site" evidence="5">
    <location>
        <position position="30"/>
    </location>
    <ligand>
        <name>RNA</name>
        <dbReference type="ChEBI" id="CHEBI:33697"/>
    </ligand>
</feature>
<feature type="binding site" evidence="5">
    <location>
        <position position="33"/>
    </location>
    <ligand>
        <name>RNA</name>
        <dbReference type="ChEBI" id="CHEBI:33697"/>
    </ligand>
</feature>
<feature type="binding site" evidence="5">
    <location>
        <position position="66"/>
    </location>
    <ligand>
        <name>RNA</name>
        <dbReference type="ChEBI" id="CHEBI:33697"/>
    </ligand>
</feature>
<feature type="binding site" evidence="5">
    <location>
        <position position="67"/>
    </location>
    <ligand>
        <name>RNA</name>
        <dbReference type="ChEBI" id="CHEBI:33697"/>
    </ligand>
</feature>
<feature type="binding site" evidence="5">
    <location>
        <position position="70"/>
    </location>
    <ligand>
        <name>RNA</name>
        <dbReference type="ChEBI" id="CHEBI:33697"/>
    </ligand>
</feature>
<feature type="binding site" evidence="5">
    <location>
        <position position="99"/>
    </location>
    <ligand>
        <name>RNA</name>
        <dbReference type="ChEBI" id="CHEBI:33697"/>
    </ligand>
</feature>
<feature type="binding site" evidence="3">
    <location>
        <position position="105"/>
    </location>
    <ligand>
        <name>RNA</name>
        <dbReference type="ChEBI" id="CHEBI:33697"/>
    </ligand>
</feature>
<feature type="binding site" evidence="5">
    <location>
        <position position="106"/>
    </location>
    <ligand>
        <name>RNA</name>
        <dbReference type="ChEBI" id="CHEBI:33697"/>
    </ligand>
</feature>
<feature type="binding site" evidence="3">
    <location>
        <position position="185"/>
    </location>
    <ligand>
        <name>RNA</name>
        <dbReference type="ChEBI" id="CHEBI:33697"/>
    </ligand>
</feature>
<feature type="binding site" evidence="3">
    <location>
        <position position="195"/>
    </location>
    <ligand>
        <name>RNA</name>
        <dbReference type="ChEBI" id="CHEBI:33697"/>
    </ligand>
</feature>
<feature type="site" description="Important for dimerization" evidence="4">
    <location>
        <position position="125"/>
    </location>
</feature>
<feature type="mutagenesis site" description="Almost complete loss of transcription." evidence="4">
    <original>W</original>
    <variation>A</variation>
    <location>
        <position position="125"/>
    </location>
</feature>
<feature type="mutagenesis site" description="90% loss of transcription." evidence="4">
    <original>R</original>
    <variation>E</variation>
    <location>
        <position position="178"/>
    </location>
</feature>
<feature type="mutagenesis site" description="75% loss of 30transcription." evidence="4">
    <original>R</original>
    <variation>Q</variation>
    <location>
        <position position="178"/>
    </location>
</feature>
<feature type="helix" evidence="16">
    <location>
        <begin position="3"/>
        <end position="10"/>
    </location>
</feature>
<feature type="helix" evidence="16">
    <location>
        <begin position="21"/>
        <end position="24"/>
    </location>
</feature>
<feature type="turn" evidence="16">
    <location>
        <begin position="25"/>
        <end position="28"/>
    </location>
</feature>
<feature type="helix" evidence="16">
    <location>
        <begin position="35"/>
        <end position="46"/>
    </location>
</feature>
<feature type="helix" evidence="16">
    <location>
        <begin position="47"/>
        <end position="49"/>
    </location>
</feature>
<feature type="helix" evidence="16">
    <location>
        <begin position="50"/>
        <end position="63"/>
    </location>
</feature>
<feature type="helix" evidence="16">
    <location>
        <begin position="68"/>
        <end position="72"/>
    </location>
</feature>
<feature type="helix" evidence="16">
    <location>
        <begin position="77"/>
        <end position="90"/>
    </location>
</feature>
<feature type="strand" evidence="17">
    <location>
        <begin position="94"/>
        <end position="96"/>
    </location>
</feature>
<feature type="helix" evidence="16">
    <location>
        <begin position="104"/>
        <end position="110"/>
    </location>
</feature>
<feature type="helix" evidence="16">
    <location>
        <begin position="112"/>
        <end position="122"/>
    </location>
</feature>
<feature type="helix" evidence="16">
    <location>
        <begin position="123"/>
        <end position="125"/>
    </location>
</feature>
<feature type="strand" evidence="16">
    <location>
        <begin position="126"/>
        <end position="128"/>
    </location>
</feature>
<feature type="helix" evidence="16">
    <location>
        <begin position="130"/>
        <end position="136"/>
    </location>
</feature>
<feature type="helix" evidence="16">
    <location>
        <begin position="142"/>
        <end position="144"/>
    </location>
</feature>
<feature type="helix" evidence="16">
    <location>
        <begin position="147"/>
        <end position="152"/>
    </location>
</feature>
<feature type="helix" evidence="16">
    <location>
        <begin position="159"/>
        <end position="180"/>
    </location>
</feature>
<feature type="helix" evidence="16">
    <location>
        <begin position="182"/>
        <end position="184"/>
    </location>
</feature>
<feature type="helix" evidence="16">
    <location>
        <begin position="189"/>
        <end position="204"/>
    </location>
</feature>
<feature type="strand" evidence="16">
    <location>
        <begin position="206"/>
        <end position="209"/>
    </location>
</feature>
<feature type="helix" evidence="16">
    <location>
        <begin position="211"/>
        <end position="220"/>
    </location>
</feature>
<feature type="helix" evidence="16">
    <location>
        <begin position="232"/>
        <end position="242"/>
    </location>
</feature>
<keyword id="KW-0002">3D-structure</keyword>
<keyword id="KW-0167">Capsid protein</keyword>
<keyword id="KW-1035">Host cytoplasm</keyword>
<keyword id="KW-1040">Host Golgi apparatus</keyword>
<keyword id="KW-1048">Host nucleus</keyword>
<keyword id="KW-0687">Ribonucleoprotein</keyword>
<keyword id="KW-0694">RNA-binding</keyword>
<keyword id="KW-0543">Viral nucleoprotein</keyword>
<keyword id="KW-0946">Virion</keyword>
<organism>
    <name type="scientific">Rift valley fever virus</name>
    <name type="common">RVFV</name>
    <dbReference type="NCBI Taxonomy" id="11588"/>
    <lineage>
        <taxon>Viruses</taxon>
        <taxon>Riboviria</taxon>
        <taxon>Orthornavirae</taxon>
        <taxon>Negarnaviricota</taxon>
        <taxon>Polyploviricotina</taxon>
        <taxon>Ellioviricetes</taxon>
        <taxon>Bunyavirales</taxon>
        <taxon>Phenuiviridae</taxon>
        <taxon>Phlebovirus</taxon>
        <taxon>Phlebovirus riftense</taxon>
    </lineage>
</organism>
<dbReference type="EMBL" id="GU372973">
    <property type="protein sequence ID" value="ADC42124.1"/>
    <property type="molecule type" value="mRNA"/>
</dbReference>
<dbReference type="PDB" id="3LYF">
    <property type="method" value="X-ray"/>
    <property type="resolution" value="1.93 A"/>
    <property type="chains" value="A/B/C/D=1-245"/>
</dbReference>
<dbReference type="PDB" id="4H5M">
    <property type="method" value="X-ray"/>
    <property type="resolution" value="3.10 A"/>
    <property type="chains" value="A/B/C/D/E/F=1-245"/>
</dbReference>
<dbReference type="PDB" id="4H5O">
    <property type="method" value="X-ray"/>
    <property type="resolution" value="3.90 A"/>
    <property type="chains" value="A/B/C/D/E/F/G/H/I/J=1-245"/>
</dbReference>
<dbReference type="PDB" id="4H5P">
    <property type="method" value="X-ray"/>
    <property type="resolution" value="2.15 A"/>
    <property type="chains" value="A/B/C/D=1-245"/>
</dbReference>
<dbReference type="PDB" id="4H5Q">
    <property type="method" value="X-ray"/>
    <property type="resolution" value="2.70 A"/>
    <property type="chains" value="A/B/C=1-245"/>
</dbReference>
<dbReference type="PDB" id="4V9E">
    <property type="method" value="X-ray"/>
    <property type="resolution" value="3.40 A"/>
    <property type="chains" value="AA/AB/AC/AD/AE/AF/AG/AH/AI/AJ/AK/AL/AM/AN/AO/AP/AQ/AR/BA/BB/BC/BD/BE/BF/BG/BH/BI/BJ/BK/BL=1-245"/>
</dbReference>
<dbReference type="PDBsum" id="3LYF"/>
<dbReference type="PDBsum" id="4H5M"/>
<dbReference type="PDBsum" id="4H5O"/>
<dbReference type="PDBsum" id="4H5P"/>
<dbReference type="PDBsum" id="4H5Q"/>
<dbReference type="PDBsum" id="4V9E"/>
<dbReference type="SMR" id="D3K5I7"/>
<dbReference type="DIP" id="DIP-59349N"/>
<dbReference type="EvolutionaryTrace" id="D3K5I7"/>
<dbReference type="Proteomes" id="UP000150713">
    <property type="component" value="Genome"/>
</dbReference>
<dbReference type="GO" id="GO:0044172">
    <property type="term" value="C:host cell endoplasmic reticulum-Golgi intermediate compartment"/>
    <property type="evidence" value="ECO:0007669"/>
    <property type="project" value="UniProtKB-SubCell"/>
</dbReference>
<dbReference type="GO" id="GO:0044177">
    <property type="term" value="C:host cell Golgi apparatus"/>
    <property type="evidence" value="ECO:0007669"/>
    <property type="project" value="UniProtKB-SubCell"/>
</dbReference>
<dbReference type="GO" id="GO:0042025">
    <property type="term" value="C:host cell nucleus"/>
    <property type="evidence" value="ECO:0007669"/>
    <property type="project" value="UniProtKB-SubCell"/>
</dbReference>
<dbReference type="GO" id="GO:1990904">
    <property type="term" value="C:ribonucleoprotein complex"/>
    <property type="evidence" value="ECO:0007669"/>
    <property type="project" value="UniProtKB-KW"/>
</dbReference>
<dbReference type="GO" id="GO:0019013">
    <property type="term" value="C:viral nucleocapsid"/>
    <property type="evidence" value="ECO:0007669"/>
    <property type="project" value="UniProtKB-KW"/>
</dbReference>
<dbReference type="GO" id="GO:0042802">
    <property type="term" value="F:identical protein binding"/>
    <property type="evidence" value="ECO:0000353"/>
    <property type="project" value="IntAct"/>
</dbReference>
<dbReference type="GO" id="GO:0003723">
    <property type="term" value="F:RNA binding"/>
    <property type="evidence" value="ECO:0007669"/>
    <property type="project" value="UniProtKB-KW"/>
</dbReference>
<dbReference type="InterPro" id="IPR009522">
    <property type="entry name" value="Capsid_Phlebovir/Tenuivir"/>
</dbReference>
<dbReference type="InterPro" id="IPR015971">
    <property type="entry name" value="Nucleocapsid_Phlebovirus"/>
</dbReference>
<dbReference type="Pfam" id="PF05733">
    <property type="entry name" value="Tenui_N"/>
    <property type="match status" value="1"/>
</dbReference>
<dbReference type="PIRSF" id="PIRSF003953">
    <property type="entry name" value="N_PhelboV"/>
    <property type="match status" value="1"/>
</dbReference>
<evidence type="ECO:0000250" key="1">
    <source>
        <dbReference type="UniProtKB" id="I6WJ72"/>
    </source>
</evidence>
<evidence type="ECO:0000250" key="2">
    <source>
        <dbReference type="UniProtKB" id="P21700"/>
    </source>
</evidence>
<evidence type="ECO:0000250" key="3">
    <source>
        <dbReference type="UniProtKB" id="P21701"/>
    </source>
</evidence>
<evidence type="ECO:0000269" key="4">
    <source>
    </source>
</evidence>
<evidence type="ECO:0000269" key="5">
    <source>
    </source>
</evidence>
<evidence type="ECO:0000269" key="6">
    <source>
    </source>
</evidence>
<evidence type="ECO:0000305" key="7"/>
<evidence type="ECO:0000305" key="8">
    <source>
    </source>
</evidence>
<evidence type="ECO:0000312" key="9">
    <source>
        <dbReference type="EMBL" id="ADC42124.1"/>
    </source>
</evidence>
<evidence type="ECO:0007744" key="10">
    <source>
        <dbReference type="PDB" id="3LYF"/>
    </source>
</evidence>
<evidence type="ECO:0007744" key="11">
    <source>
        <dbReference type="PDB" id="4H5M"/>
    </source>
</evidence>
<evidence type="ECO:0007744" key="12">
    <source>
        <dbReference type="PDB" id="4H5O"/>
    </source>
</evidence>
<evidence type="ECO:0007744" key="13">
    <source>
        <dbReference type="PDB" id="4H5P"/>
    </source>
</evidence>
<evidence type="ECO:0007744" key="14">
    <source>
        <dbReference type="PDB" id="4H5Q"/>
    </source>
</evidence>
<evidence type="ECO:0007744" key="15">
    <source>
        <dbReference type="PDB" id="4V9E"/>
    </source>
</evidence>
<evidence type="ECO:0007829" key="16">
    <source>
        <dbReference type="PDB" id="3LYF"/>
    </source>
</evidence>
<evidence type="ECO:0007829" key="17">
    <source>
        <dbReference type="PDB" id="4H5P"/>
    </source>
</evidence>